<organism>
    <name type="scientific">Listeria monocytogenes serotype 4b (strain F2365)</name>
    <dbReference type="NCBI Taxonomy" id="265669"/>
    <lineage>
        <taxon>Bacteria</taxon>
        <taxon>Bacillati</taxon>
        <taxon>Bacillota</taxon>
        <taxon>Bacilli</taxon>
        <taxon>Bacillales</taxon>
        <taxon>Listeriaceae</taxon>
        <taxon>Listeria</taxon>
    </lineage>
</organism>
<comment type="function">
    <text evidence="1">A probable RNA chaperone. Forms a complex with KhpB which binds to cellular RNA and controls its expression. Plays a role in peptidoglycan (PG) homeostasis and cell length regulation.</text>
</comment>
<comment type="subunit">
    <text evidence="1">Forms a complex with KhpB.</text>
</comment>
<comment type="subcellular location">
    <subcellularLocation>
        <location evidence="1">Cytoplasm</location>
    </subcellularLocation>
</comment>
<comment type="similarity">
    <text evidence="1">Belongs to the KhpA RNA-binding protein family.</text>
</comment>
<proteinExistence type="inferred from homology"/>
<feature type="chain" id="PRO_0000163228" description="RNA-binding protein KhpA">
    <location>
        <begin position="1"/>
        <end position="76"/>
    </location>
</feature>
<feature type="domain" description="KH" evidence="1">
    <location>
        <begin position="29"/>
        <end position="76"/>
    </location>
</feature>
<gene>
    <name evidence="1" type="primary">khpA</name>
    <name type="ordered locus">LMOf2365_1823</name>
</gene>
<sequence length="76" mass="8522">MEELILSIVKPLVDHPEDVVITPEETDTSLTYKLSVSKEDMGRVIGKQGRIAKAIRTLVYAVGSKNDKKIRLEIIE</sequence>
<reference key="1">
    <citation type="journal article" date="2004" name="Nucleic Acids Res.">
        <title>Whole genome comparisons of serotype 4b and 1/2a strains of the food-borne pathogen Listeria monocytogenes reveal new insights into the core genome components of this species.</title>
        <authorList>
            <person name="Nelson K.E."/>
            <person name="Fouts D.E."/>
            <person name="Mongodin E.F."/>
            <person name="Ravel J."/>
            <person name="DeBoy R.T."/>
            <person name="Kolonay J.F."/>
            <person name="Rasko D.A."/>
            <person name="Angiuoli S.V."/>
            <person name="Gill S.R."/>
            <person name="Paulsen I.T."/>
            <person name="Peterson J.D."/>
            <person name="White O."/>
            <person name="Nelson W.C."/>
            <person name="Nierman W.C."/>
            <person name="Beanan M.J."/>
            <person name="Brinkac L.M."/>
            <person name="Daugherty S.C."/>
            <person name="Dodson R.J."/>
            <person name="Durkin A.S."/>
            <person name="Madupu R."/>
            <person name="Haft D.H."/>
            <person name="Selengut J."/>
            <person name="Van Aken S.E."/>
            <person name="Khouri H.M."/>
            <person name="Fedorova N."/>
            <person name="Forberger H.A."/>
            <person name="Tran B."/>
            <person name="Kathariou S."/>
            <person name="Wonderling L.D."/>
            <person name="Uhlich G.A."/>
            <person name="Bayles D.O."/>
            <person name="Luchansky J.B."/>
            <person name="Fraser C.M."/>
        </authorList>
    </citation>
    <scope>NUCLEOTIDE SEQUENCE [LARGE SCALE GENOMIC DNA]</scope>
    <source>
        <strain>F2365</strain>
    </source>
</reference>
<protein>
    <recommendedName>
        <fullName evidence="1">RNA-binding protein KhpA</fullName>
    </recommendedName>
    <alternativeName>
        <fullName evidence="1">KH-domain protein A</fullName>
    </alternativeName>
</protein>
<keyword id="KW-0133">Cell shape</keyword>
<keyword id="KW-0961">Cell wall biogenesis/degradation</keyword>
<keyword id="KW-0143">Chaperone</keyword>
<keyword id="KW-0963">Cytoplasm</keyword>
<keyword id="KW-0694">RNA-binding</keyword>
<name>KHPA_LISMF</name>
<evidence type="ECO:0000255" key="1">
    <source>
        <dbReference type="HAMAP-Rule" id="MF_00088"/>
    </source>
</evidence>
<dbReference type="EMBL" id="AE017262">
    <property type="protein sequence ID" value="AAT04594.1"/>
    <property type="molecule type" value="Genomic_DNA"/>
</dbReference>
<dbReference type="RefSeq" id="WP_003728421.1">
    <property type="nucleotide sequence ID" value="NC_002973.6"/>
</dbReference>
<dbReference type="SMR" id="Q71YM0"/>
<dbReference type="KEGG" id="lmf:LMOf2365_1823"/>
<dbReference type="HOGENOM" id="CLU_132074_1_2_9"/>
<dbReference type="GO" id="GO:0005737">
    <property type="term" value="C:cytoplasm"/>
    <property type="evidence" value="ECO:0007669"/>
    <property type="project" value="UniProtKB-SubCell"/>
</dbReference>
<dbReference type="GO" id="GO:0003723">
    <property type="term" value="F:RNA binding"/>
    <property type="evidence" value="ECO:0007669"/>
    <property type="project" value="UniProtKB-UniRule"/>
</dbReference>
<dbReference type="GO" id="GO:0071555">
    <property type="term" value="P:cell wall organization"/>
    <property type="evidence" value="ECO:0007669"/>
    <property type="project" value="UniProtKB-KW"/>
</dbReference>
<dbReference type="GO" id="GO:0009252">
    <property type="term" value="P:peptidoglycan biosynthetic process"/>
    <property type="evidence" value="ECO:0007669"/>
    <property type="project" value="UniProtKB-UniRule"/>
</dbReference>
<dbReference type="GO" id="GO:0008360">
    <property type="term" value="P:regulation of cell shape"/>
    <property type="evidence" value="ECO:0007669"/>
    <property type="project" value="UniProtKB-KW"/>
</dbReference>
<dbReference type="CDD" id="cd22533">
    <property type="entry name" value="KH-II_YlqC-like"/>
    <property type="match status" value="1"/>
</dbReference>
<dbReference type="Gene3D" id="3.30.300.20">
    <property type="match status" value="1"/>
</dbReference>
<dbReference type="HAMAP" id="MF_00088">
    <property type="entry name" value="KhpA"/>
    <property type="match status" value="1"/>
</dbReference>
<dbReference type="InterPro" id="IPR015946">
    <property type="entry name" value="KH_dom-like_a/b"/>
</dbReference>
<dbReference type="InterPro" id="IPR009019">
    <property type="entry name" value="KH_sf_prok-type"/>
</dbReference>
<dbReference type="InterPro" id="IPR020627">
    <property type="entry name" value="KhpA"/>
</dbReference>
<dbReference type="PANTHER" id="PTHR34654:SF1">
    <property type="entry name" value="RNA-BINDING PROTEIN KHPA"/>
    <property type="match status" value="1"/>
</dbReference>
<dbReference type="PANTHER" id="PTHR34654">
    <property type="entry name" value="UPF0109 PROTEIN SCO5592"/>
    <property type="match status" value="1"/>
</dbReference>
<dbReference type="Pfam" id="PF13083">
    <property type="entry name" value="KH_KhpA-B"/>
    <property type="match status" value="1"/>
</dbReference>
<dbReference type="SUPFAM" id="SSF54814">
    <property type="entry name" value="Prokaryotic type KH domain (KH-domain type II)"/>
    <property type="match status" value="1"/>
</dbReference>
<dbReference type="PROSITE" id="PS50084">
    <property type="entry name" value="KH_TYPE_1"/>
    <property type="match status" value="1"/>
</dbReference>
<accession>Q71YM0</accession>